<keyword id="KW-0002">3D-structure</keyword>
<keyword id="KW-0007">Acetylation</keyword>
<keyword id="KW-0175">Coiled coil</keyword>
<keyword id="KW-0963">Cytoplasm</keyword>
<keyword id="KW-1017">Isopeptide bond</keyword>
<keyword id="KW-0506">mRNA capping</keyword>
<keyword id="KW-0507">mRNA processing</keyword>
<keyword id="KW-0508">mRNA splicing</keyword>
<keyword id="KW-0509">mRNA transport</keyword>
<keyword id="KW-0866">Nonsense-mediated mRNA decay</keyword>
<keyword id="KW-0539">Nucleus</keyword>
<keyword id="KW-0597">Phosphoprotein</keyword>
<keyword id="KW-1185">Reference proteome</keyword>
<keyword id="KW-0943">RNA-mediated gene silencing</keyword>
<keyword id="KW-0810">Translation regulation</keyword>
<keyword id="KW-0813">Transport</keyword>
<keyword id="KW-0832">Ubl conjugation</keyword>
<dbReference type="EMBL" id="AK134334">
    <property type="protein sequence ID" value="BAE22102.1"/>
    <property type="molecule type" value="mRNA"/>
</dbReference>
<dbReference type="EMBL" id="AK169557">
    <property type="protein sequence ID" value="BAE41227.1"/>
    <property type="molecule type" value="mRNA"/>
</dbReference>
<dbReference type="EMBL" id="AL732615">
    <property type="status" value="NOT_ANNOTATED_CDS"/>
    <property type="molecule type" value="Genomic_DNA"/>
</dbReference>
<dbReference type="EMBL" id="AL929438">
    <property type="status" value="NOT_ANNOTATED_CDS"/>
    <property type="molecule type" value="Genomic_DNA"/>
</dbReference>
<dbReference type="EMBL" id="CH466565">
    <property type="protein sequence ID" value="EDL02380.1"/>
    <property type="molecule type" value="Genomic_DNA"/>
</dbReference>
<dbReference type="EMBL" id="BC055777">
    <property type="protein sequence ID" value="AAH55777.1"/>
    <property type="molecule type" value="mRNA"/>
</dbReference>
<dbReference type="EMBL" id="BC138898">
    <property type="protein sequence ID" value="AAI38899.1"/>
    <property type="molecule type" value="mRNA"/>
</dbReference>
<dbReference type="CCDS" id="CCDS18145.1"/>
<dbReference type="RefSeq" id="NP_001028373.2">
    <property type="nucleotide sequence ID" value="NM_001033201.4"/>
</dbReference>
<dbReference type="PDB" id="3UKZ">
    <property type="method" value="X-ray"/>
    <property type="resolution" value="2.30 A"/>
    <property type="chains" value="C=1-23"/>
</dbReference>
<dbReference type="PDB" id="3UL0">
    <property type="method" value="X-ray"/>
    <property type="resolution" value="2.00 A"/>
    <property type="chains" value="C=1-23"/>
</dbReference>
<dbReference type="PDBsum" id="3UKZ"/>
<dbReference type="PDBsum" id="3UL0"/>
<dbReference type="SMR" id="Q3UYV9"/>
<dbReference type="BioGRID" id="241386">
    <property type="interactions" value="43"/>
</dbReference>
<dbReference type="ComplexPortal" id="CPX-3661">
    <property type="entry name" value="Alternative nuclear cap-binding complex"/>
</dbReference>
<dbReference type="ComplexPortal" id="CPX-923">
    <property type="entry name" value="Nuclear cap-binding complex"/>
</dbReference>
<dbReference type="CORUM" id="Q3UYV9"/>
<dbReference type="FunCoup" id="Q3UYV9">
    <property type="interactions" value="4580"/>
</dbReference>
<dbReference type="STRING" id="10090.ENSMUSP00000030014"/>
<dbReference type="GlyGen" id="Q3UYV9">
    <property type="glycosylation" value="1 site, 1 O-linked glycan (1 site)"/>
</dbReference>
<dbReference type="iPTMnet" id="Q3UYV9"/>
<dbReference type="PhosphoSitePlus" id="Q3UYV9"/>
<dbReference type="SwissPalm" id="Q3UYV9"/>
<dbReference type="jPOST" id="Q3UYV9"/>
<dbReference type="PaxDb" id="10090-ENSMUSP00000030014"/>
<dbReference type="PeptideAtlas" id="Q3UYV9"/>
<dbReference type="ProteomicsDB" id="252647"/>
<dbReference type="Pumba" id="Q3UYV9"/>
<dbReference type="Antibodypedia" id="28868">
    <property type="antibodies" value="234 antibodies from 34 providers"/>
</dbReference>
<dbReference type="Ensembl" id="ENSMUST00000030014.9">
    <property type="protein sequence ID" value="ENSMUSP00000030014.9"/>
    <property type="gene ID" value="ENSMUSG00000028330.9"/>
</dbReference>
<dbReference type="GeneID" id="433702"/>
<dbReference type="KEGG" id="mmu:433702"/>
<dbReference type="UCSC" id="uc008stk.1">
    <property type="organism name" value="mouse"/>
</dbReference>
<dbReference type="AGR" id="MGI:1891840"/>
<dbReference type="CTD" id="4686"/>
<dbReference type="MGI" id="MGI:1891840">
    <property type="gene designation" value="Ncbp1"/>
</dbReference>
<dbReference type="VEuPathDB" id="HostDB:ENSMUSG00000028330"/>
<dbReference type="eggNOG" id="KOG1104">
    <property type="taxonomic scope" value="Eukaryota"/>
</dbReference>
<dbReference type="GeneTree" id="ENSGT00390000001733"/>
<dbReference type="HOGENOM" id="CLU_013207_0_0_1"/>
<dbReference type="InParanoid" id="Q3UYV9"/>
<dbReference type="OMA" id="CAAEGLM"/>
<dbReference type="OrthoDB" id="10252707at2759"/>
<dbReference type="PhylomeDB" id="Q3UYV9"/>
<dbReference type="TreeFam" id="TF313400"/>
<dbReference type="Reactome" id="R-MMU-111367">
    <property type="pathway name" value="SLBP independent Processing of Histone Pre-mRNAs"/>
</dbReference>
<dbReference type="Reactome" id="R-MMU-112382">
    <property type="pathway name" value="Formation of RNA Pol II elongation complex"/>
</dbReference>
<dbReference type="Reactome" id="R-MMU-113418">
    <property type="pathway name" value="Formation of the Early Elongation Complex"/>
</dbReference>
<dbReference type="Reactome" id="R-MMU-159227">
    <property type="pathway name" value="Transport of the SLBP independent Mature mRNA"/>
</dbReference>
<dbReference type="Reactome" id="R-MMU-159230">
    <property type="pathway name" value="Transport of the SLBP Dependant Mature mRNA"/>
</dbReference>
<dbReference type="Reactome" id="R-MMU-159231">
    <property type="pathway name" value="Transport of Mature mRNA Derived from an Intronless Transcript"/>
</dbReference>
<dbReference type="Reactome" id="R-MMU-159236">
    <property type="pathway name" value="Transport of Mature mRNA derived from an Intron-Containing Transcript"/>
</dbReference>
<dbReference type="Reactome" id="R-MMU-674695">
    <property type="pathway name" value="RNA Polymerase II Pre-transcription Events"/>
</dbReference>
<dbReference type="Reactome" id="R-MMU-6803529">
    <property type="pathway name" value="FGFR2 alternative splicing"/>
</dbReference>
<dbReference type="Reactome" id="R-MMU-6807505">
    <property type="pathway name" value="RNA polymerase II transcribes snRNA genes"/>
</dbReference>
<dbReference type="Reactome" id="R-MMU-72086">
    <property type="pathway name" value="mRNA Capping"/>
</dbReference>
<dbReference type="Reactome" id="R-MMU-72163">
    <property type="pathway name" value="mRNA Splicing - Major Pathway"/>
</dbReference>
<dbReference type="Reactome" id="R-MMU-72165">
    <property type="pathway name" value="mRNA Splicing - Minor Pathway"/>
</dbReference>
<dbReference type="Reactome" id="R-MMU-72187">
    <property type="pathway name" value="mRNA 3'-end processing"/>
</dbReference>
<dbReference type="Reactome" id="R-MMU-72203">
    <property type="pathway name" value="Processing of Capped Intron-Containing Pre-mRNA"/>
</dbReference>
<dbReference type="Reactome" id="R-MMU-73856">
    <property type="pathway name" value="RNA Polymerase II Transcription Termination"/>
</dbReference>
<dbReference type="Reactome" id="R-MMU-77588">
    <property type="pathway name" value="SLBP Dependent Processing of Replication-Dependent Histone Pre-mRNAs"/>
</dbReference>
<dbReference type="Reactome" id="R-MMU-77595">
    <property type="pathway name" value="Processing of Intronless Pre-mRNAs"/>
</dbReference>
<dbReference type="Reactome" id="R-MMU-975956">
    <property type="pathway name" value="Nonsense Mediated Decay (NMD) independent of the Exon Junction Complex (EJC)"/>
</dbReference>
<dbReference type="Reactome" id="R-MMU-975957">
    <property type="pathway name" value="Nonsense Mediated Decay (NMD) enhanced by the Exon Junction Complex (EJC)"/>
</dbReference>
<dbReference type="BioGRID-ORCS" id="433702">
    <property type="hits" value="30 hits in 77 CRISPR screens"/>
</dbReference>
<dbReference type="ChiTaRS" id="Ncbp1">
    <property type="organism name" value="mouse"/>
</dbReference>
<dbReference type="PRO" id="PR:Q3UYV9"/>
<dbReference type="Proteomes" id="UP000000589">
    <property type="component" value="Chromosome 4"/>
</dbReference>
<dbReference type="RNAct" id="Q3UYV9">
    <property type="molecule type" value="protein"/>
</dbReference>
<dbReference type="Bgee" id="ENSMUSG00000028330">
    <property type="expression patterns" value="Expressed in spermatid and 258 other cell types or tissues"/>
</dbReference>
<dbReference type="GO" id="GO:0005737">
    <property type="term" value="C:cytoplasm"/>
    <property type="evidence" value="ECO:0000266"/>
    <property type="project" value="ComplexPortal"/>
</dbReference>
<dbReference type="GO" id="GO:0005829">
    <property type="term" value="C:cytosol"/>
    <property type="evidence" value="ECO:0007669"/>
    <property type="project" value="Ensembl"/>
</dbReference>
<dbReference type="GO" id="GO:0005739">
    <property type="term" value="C:mitochondrion"/>
    <property type="evidence" value="ECO:0007669"/>
    <property type="project" value="Ensembl"/>
</dbReference>
<dbReference type="GO" id="GO:0005846">
    <property type="term" value="C:nuclear cap binding complex"/>
    <property type="evidence" value="ECO:0000250"/>
    <property type="project" value="UniProtKB"/>
</dbReference>
<dbReference type="GO" id="GO:0005654">
    <property type="term" value="C:nucleoplasm"/>
    <property type="evidence" value="ECO:0007669"/>
    <property type="project" value="Ensembl"/>
</dbReference>
<dbReference type="GO" id="GO:0005634">
    <property type="term" value="C:nucleus"/>
    <property type="evidence" value="ECO:0000250"/>
    <property type="project" value="UniProtKB"/>
</dbReference>
<dbReference type="GO" id="GO:1990904">
    <property type="term" value="C:ribonucleoprotein complex"/>
    <property type="evidence" value="ECO:0000250"/>
    <property type="project" value="UniProtKB"/>
</dbReference>
<dbReference type="GO" id="GO:0000340">
    <property type="term" value="F:RNA 7-methylguanosine cap binding"/>
    <property type="evidence" value="ECO:0007669"/>
    <property type="project" value="Ensembl"/>
</dbReference>
<dbReference type="GO" id="GO:0006370">
    <property type="term" value="P:7-methylguanosine mRNA capping"/>
    <property type="evidence" value="ECO:0000250"/>
    <property type="project" value="UniProtKB"/>
</dbReference>
<dbReference type="GO" id="GO:0000380">
    <property type="term" value="P:alternative mRNA splicing, via spliceosome"/>
    <property type="evidence" value="ECO:0000303"/>
    <property type="project" value="ComplexPortal"/>
</dbReference>
<dbReference type="GO" id="GO:0002191">
    <property type="term" value="P:cap-dependent translational initiation"/>
    <property type="evidence" value="ECO:0000303"/>
    <property type="project" value="ComplexPortal"/>
</dbReference>
<dbReference type="GO" id="GO:0051607">
    <property type="term" value="P:defense response to virus"/>
    <property type="evidence" value="ECO:0000266"/>
    <property type="project" value="ComplexPortal"/>
</dbReference>
<dbReference type="GO" id="GO:0008334">
    <property type="term" value="P:histone mRNA metabolic process"/>
    <property type="evidence" value="ECO:0000315"/>
    <property type="project" value="ComplexPortal"/>
</dbReference>
<dbReference type="GO" id="GO:0035195">
    <property type="term" value="P:miRNA-mediated post-transcriptional gene silencing"/>
    <property type="evidence" value="ECO:0000303"/>
    <property type="project" value="ComplexPortal"/>
</dbReference>
<dbReference type="GO" id="GO:0031124">
    <property type="term" value="P:mRNA 3'-end processing"/>
    <property type="evidence" value="ECO:0000303"/>
    <property type="project" value="ComplexPortal"/>
</dbReference>
<dbReference type="GO" id="GO:0006406">
    <property type="term" value="P:mRNA export from nucleus"/>
    <property type="evidence" value="ECO:0000250"/>
    <property type="project" value="UniProtKB"/>
</dbReference>
<dbReference type="GO" id="GO:0016071">
    <property type="term" value="P:mRNA metabolic process"/>
    <property type="evidence" value="ECO:0000250"/>
    <property type="project" value="UniProtKB"/>
</dbReference>
<dbReference type="GO" id="GO:0000398">
    <property type="term" value="P:mRNA splicing, via spliceosome"/>
    <property type="evidence" value="ECO:0000303"/>
    <property type="project" value="ComplexPortal"/>
</dbReference>
<dbReference type="GO" id="GO:0042789">
    <property type="term" value="P:mRNA transcription by RNA polymerase II"/>
    <property type="evidence" value="ECO:0000266"/>
    <property type="project" value="ComplexPortal"/>
</dbReference>
<dbReference type="GO" id="GO:0000184">
    <property type="term" value="P:nuclear-transcribed mRNA catabolic process, nonsense-mediated decay"/>
    <property type="evidence" value="ECO:0000250"/>
    <property type="project" value="UniProtKB"/>
</dbReference>
<dbReference type="GO" id="GO:0030307">
    <property type="term" value="P:positive regulation of cell growth"/>
    <property type="evidence" value="ECO:0000250"/>
    <property type="project" value="UniProtKB"/>
</dbReference>
<dbReference type="GO" id="GO:0031442">
    <property type="term" value="P:positive regulation of mRNA 3'-end processing"/>
    <property type="evidence" value="ECO:0000250"/>
    <property type="project" value="UniProtKB"/>
</dbReference>
<dbReference type="GO" id="GO:0048026">
    <property type="term" value="P:positive regulation of mRNA splicing, via spliceosome"/>
    <property type="evidence" value="ECO:0007669"/>
    <property type="project" value="Ensembl"/>
</dbReference>
<dbReference type="GO" id="GO:0032968">
    <property type="term" value="P:positive regulation of transcription elongation by RNA polymerase II"/>
    <property type="evidence" value="ECO:0000303"/>
    <property type="project" value="ComplexPortal"/>
</dbReference>
<dbReference type="GO" id="GO:0031053">
    <property type="term" value="P:primary miRNA processing"/>
    <property type="evidence" value="ECO:0000303"/>
    <property type="project" value="ComplexPortal"/>
</dbReference>
<dbReference type="GO" id="GO:0006446">
    <property type="term" value="P:regulation of translational initiation"/>
    <property type="evidence" value="ECO:0000250"/>
    <property type="project" value="UniProtKB"/>
</dbReference>
<dbReference type="GO" id="GO:0035194">
    <property type="term" value="P:regulatory ncRNA-mediated post-transcriptional gene silencing"/>
    <property type="evidence" value="ECO:0000303"/>
    <property type="project" value="ComplexPortal"/>
</dbReference>
<dbReference type="GO" id="GO:0006408">
    <property type="term" value="P:snRNA export from nucleus"/>
    <property type="evidence" value="ECO:0000266"/>
    <property type="project" value="ComplexPortal"/>
</dbReference>
<dbReference type="GO" id="GO:0000245">
    <property type="term" value="P:spliceosomal complex assembly"/>
    <property type="evidence" value="ECO:0007669"/>
    <property type="project" value="Ensembl"/>
</dbReference>
<dbReference type="FunFam" id="1.25.40.180:FF:000021">
    <property type="entry name" value="Nuclear cap binding protein subunit 1"/>
    <property type="match status" value="1"/>
</dbReference>
<dbReference type="FunFam" id="1.25.40.180:FF:000010">
    <property type="entry name" value="Nuclear cap-binding protein subunit 1"/>
    <property type="match status" value="1"/>
</dbReference>
<dbReference type="Gene3D" id="1.25.40.180">
    <property type="match status" value="3"/>
</dbReference>
<dbReference type="IDEAL" id="IID50179"/>
<dbReference type="InterPro" id="IPR016024">
    <property type="entry name" value="ARM-type_fold"/>
</dbReference>
<dbReference type="InterPro" id="IPR027159">
    <property type="entry name" value="CBP80"/>
</dbReference>
<dbReference type="InterPro" id="IPR015172">
    <property type="entry name" value="MIF4G-like_typ-1"/>
</dbReference>
<dbReference type="InterPro" id="IPR015174">
    <property type="entry name" value="MIF4G-like_typ-2"/>
</dbReference>
<dbReference type="InterPro" id="IPR003890">
    <property type="entry name" value="MIF4G-like_typ-3"/>
</dbReference>
<dbReference type="PANTHER" id="PTHR12412">
    <property type="entry name" value="CAP BINDING PROTEIN"/>
    <property type="match status" value="1"/>
</dbReference>
<dbReference type="PANTHER" id="PTHR12412:SF2">
    <property type="entry name" value="NUCLEAR CAP-BINDING PROTEIN SUBUNIT 1"/>
    <property type="match status" value="1"/>
</dbReference>
<dbReference type="Pfam" id="PF02854">
    <property type="entry name" value="MIF4G"/>
    <property type="match status" value="1"/>
</dbReference>
<dbReference type="Pfam" id="PF09088">
    <property type="entry name" value="MIF4G_like"/>
    <property type="match status" value="1"/>
</dbReference>
<dbReference type="Pfam" id="PF09090">
    <property type="entry name" value="MIF4G_like_2"/>
    <property type="match status" value="1"/>
</dbReference>
<dbReference type="SMART" id="SM00543">
    <property type="entry name" value="MIF4G"/>
    <property type="match status" value="1"/>
</dbReference>
<dbReference type="SUPFAM" id="SSF48371">
    <property type="entry name" value="ARM repeat"/>
    <property type="match status" value="3"/>
</dbReference>
<organism>
    <name type="scientific">Mus musculus</name>
    <name type="common">Mouse</name>
    <dbReference type="NCBI Taxonomy" id="10090"/>
    <lineage>
        <taxon>Eukaryota</taxon>
        <taxon>Metazoa</taxon>
        <taxon>Chordata</taxon>
        <taxon>Craniata</taxon>
        <taxon>Vertebrata</taxon>
        <taxon>Euteleostomi</taxon>
        <taxon>Mammalia</taxon>
        <taxon>Eutheria</taxon>
        <taxon>Euarchontoglires</taxon>
        <taxon>Glires</taxon>
        <taxon>Rodentia</taxon>
        <taxon>Myomorpha</taxon>
        <taxon>Muroidea</taxon>
        <taxon>Muridae</taxon>
        <taxon>Murinae</taxon>
        <taxon>Mus</taxon>
        <taxon>Mus</taxon>
    </lineage>
</organism>
<feature type="chain" id="PRO_0000239779" description="Nuclear cap-binding protein subunit 1">
    <location>
        <begin position="1"/>
        <end position="790"/>
    </location>
</feature>
<feature type="domain" description="MIF4G">
    <location>
        <begin position="28"/>
        <end position="240"/>
    </location>
</feature>
<feature type="region of interest" description="Disordered" evidence="3">
    <location>
        <begin position="1"/>
        <end position="26"/>
    </location>
</feature>
<feature type="region of interest" description="Disordered" evidence="3">
    <location>
        <begin position="666"/>
        <end position="685"/>
    </location>
</feature>
<feature type="coiled-coil region" evidence="2">
    <location>
        <begin position="643"/>
        <end position="713"/>
    </location>
</feature>
<feature type="short sequence motif" description="Nuclear localization signal" evidence="2">
    <location>
        <begin position="3"/>
        <end position="20"/>
    </location>
</feature>
<feature type="modified residue" description="Phosphoserine" evidence="1">
    <location>
        <position position="7"/>
    </location>
</feature>
<feature type="modified residue" description="Phosphothreonine" evidence="11">
    <location>
        <position position="21"/>
    </location>
</feature>
<feature type="modified residue" description="Phosphoserine" evidence="10 11">
    <location>
        <position position="22"/>
    </location>
</feature>
<feature type="modified residue" description="Phosphoserine" evidence="1">
    <location>
        <position position="201"/>
    </location>
</feature>
<feature type="modified residue" description="N6-acetyllysine" evidence="1">
    <location>
        <position position="204"/>
    </location>
</feature>
<feature type="modified residue" description="N6-acetyllysine" evidence="1">
    <location>
        <position position="698"/>
    </location>
</feature>
<feature type="cross-link" description="Glycyl lysine isopeptide (Lys-Gly) (interchain with G-Cter in SUMO2)" evidence="1">
    <location>
        <position position="684"/>
    </location>
</feature>
<feature type="sequence conflict" description="In Ref. 1; BAE22102." evidence="9" ref="1">
    <original>H</original>
    <variation>R</variation>
    <location>
        <position position="319"/>
    </location>
</feature>
<feature type="sequence conflict" description="In Ref. 1; BAE22102." evidence="9" ref="1">
    <original>S</original>
    <variation>R</variation>
    <location>
        <position position="443"/>
    </location>
</feature>
<feature type="sequence conflict" description="In Ref. 1; BAE22102." evidence="9" ref="1">
    <original>L</original>
    <variation>I</variation>
    <location>
        <position position="453"/>
    </location>
</feature>
<feature type="sequence conflict" description="In Ref. 1; BAE22102." evidence="9" ref="1">
    <original>K</original>
    <variation>Q</variation>
    <location>
        <position position="574"/>
    </location>
</feature>
<protein>
    <recommendedName>
        <fullName>Nuclear cap-binding protein subunit 1</fullName>
    </recommendedName>
    <alternativeName>
        <fullName>80 kDa nuclear cap-binding protein</fullName>
        <shortName>CBP80</shortName>
        <shortName>NCBP 80 kDa subunit</shortName>
    </alternativeName>
</protein>
<gene>
    <name type="primary">Ncbp1</name>
    <name type="synonym">Cbp80</name>
</gene>
<evidence type="ECO:0000250" key="1">
    <source>
        <dbReference type="UniProtKB" id="Q09161"/>
    </source>
</evidence>
<evidence type="ECO:0000255" key="2"/>
<evidence type="ECO:0000256" key="3">
    <source>
        <dbReference type="SAM" id="MobiDB-lite"/>
    </source>
</evidence>
<evidence type="ECO:0000269" key="4">
    <source>
    </source>
</evidence>
<evidence type="ECO:0000269" key="5">
    <source>
    </source>
</evidence>
<evidence type="ECO:0000269" key="6">
    <source>
    </source>
</evidence>
<evidence type="ECO:0000269" key="7">
    <source>
    </source>
</evidence>
<evidence type="ECO:0000269" key="8">
    <source>
    </source>
</evidence>
<evidence type="ECO:0000305" key="9"/>
<evidence type="ECO:0007744" key="10">
    <source>
    </source>
</evidence>
<evidence type="ECO:0007744" key="11">
    <source>
    </source>
</evidence>
<proteinExistence type="evidence at protein level"/>
<name>NCBP1_MOUSE</name>
<sequence>MSRRRHSYENDGGQPHKRRKTSDANETEDHLESLICKVGEKSACSLESNLEGLAGVLEADLPNYKSKILRLLCTVARLLPEKLTIYTTLVGLLNARNYNFGGEFVEAMIRQLKESLKANNYNEAVYLVRFLSDLVNCHVIAAPSMVAMFENFVSVTQEEDVPQVRRDWYVYAFLSSLPWVGKELYEKKDAEMDRIFSTTESYLKRRQKTHVPMLQVWTADKPHPQEEYLDCLWAQIQKLKKDRWQERHILRPYLAFDSILCEALQHNLPPFTPPPHTEDSVYPMPRVIFRMFDYTDDPEGPVMPGSHSVERFVIEENLHCIIKSYWKERKTCAAQLVSYPGKNKIPLNYHIVEVIFAELFQLPAPPHIDVMYTTLLIELCKLQPGSLPQVLAQATEMLYMRLDTMSTTCVDRFINWFSHHLSNFQFRWSWEDWSDCLTQDLESPKPKFVREVLEKCMRLSYHQHILDIVPPTFSALCPANPTCIYKYGDESSNSLPGHSVALCLSVAFKSKATNDEIFSILKDVPNPNQVDDDDEGFRFNPLKIEVFVQTLLHLAAKSFSHSFSALAKFHEVFKTLAESDKGKLHVLRVMFEVWRNHPQMIAVLVDKMIRTQIVDCAAVANWIFSSELSRDFTRLFVWEILHSTIRKMNKHVLKIQKELEEAKEKLARQHKRRSDDDDRSSDRKDGALEEQIERLQEKVEAAQSEQKNLFLVIFQRFIMILTEHLVRCETDGTSILTPWYKNCIERLQQIFLQHHQTIQQYMVTLENLLFTAELDPHILAVFQQFCALQA</sequence>
<accession>Q3UYV9</accession>
<accession>B1AWH4</accession>
<accession>Q3TEM1</accession>
<accession>Q7TNE8</accession>
<comment type="function">
    <text evidence="1 6">Component of the cap-binding complex (CBC), which binds cotranscriptionally to the 5'-cap of pre-mRNAs and is involved in various processes such as pre-mRNA splicing, translation regulation, nonsense-mediated mRNA decay, RNA-mediated gene silencing (RNAi) by microRNAs (miRNAs) and mRNA export. The CBC complex is involved in mRNA export from the nucleus via its interaction with ALYREF/THOC4/ALY, leading to the recruitment of the mRNA export machinery to the 5'-end of mRNA and to mRNA export in a 5' to 3' direction through the nuclear pore. The CBC complex is also involved in mediating U snRNA and intronless mRNAs export from the nucleus. The CBC complex is essential for a pioneer round of mRNA translation, before steady state translation when the CBC complex is replaced by cytoplasmic cap-binding protein eIF4E. The pioneer round of mRNA translation mediated by the CBC complex plays a central role in nonsense-mediated mRNA decay (NMD), NMD only taking place in mRNAs bound to the CBC complex, but not on eIF4E-bound mRNAs. The CBC complex enhances NMD in mRNAs containing at least one exon-junction complex (EJC) via its interaction with UPF1, promoting the interaction between UPF1 and UPF2. The CBC complex is also involved in 'failsafe' NMD, which is independent of the EJC complex, while it does not participate in Staufen-mediated mRNA decay (SMD). During cell proliferation, the CBC complex is also involved in microRNAs (miRNAs) biogenesis via its interaction with SRRT/ARS2 and is required for miRNA-mediated RNA interference. The CBC complex also acts as a negative regulator of PARN, thereby acting as an inhibitor of mRNA deadenylation. In the CBC complex, NCBP1/CBP80 does not bind directly capped RNAs (m7GpppG-capped RNA) but is required to stabilize the movement of the N-terminal loop of NCBP2/CBP20 and lock the CBC into a high affinity cap-binding state with the cap structure. Associates with NCBP3 to form an alternative cap-binding complex (CBC) which plays a key role in mRNA export and is particularly important in cellular stress situations such as virus infections. The conventional CBC with NCBP2 binds both small nuclear RNA (snRNA) and messenger (mRNA) and is involved in their export from the nucleus whereas the alternative CBC with NCBP3 does not bind snRNA and associates only with mRNA thereby playing a role only in mRNA export. NCBP1/CBP80 is required for cell growth and viability (By similarity).</text>
</comment>
<comment type="subunit">
    <text evidence="1 4 5 6 7 8">Component of the nuclear cap-binding complex (CBC), a heterodimer composed of NCBP1/CBP80 and NCBP2/CBP20 that interacts with m7GpppG-capped RNA. Found in a U snRNA export complex containing PHAX/RNUXA, NCBP1/CBP80, NCBP2/CBP20, RAN, XPO1 and m7G-capped RNA. Identified in a IGF2BP1-dependent mRNP granule complex containing untranslated mRNAs. Interacts with PHAX/RNUXA, SRRT/ARS2, EIF4G2, IGF2BP1, HNRNPF, HNRNPH1, KIAA0427/CTIF, PARN, DROSHA, UPF1 and ALYREF/THOC4. May interact with EIF4G1; the interaction is however controversial. The large PER complex involved in the repression of transcriptional termination is composed of at least PER2, CDK9, DDX5, DHX9, NCBP1/CBP80 and POLR2A (active). Component of an alternative nuclear cap-binding complex (CBC) composed of NCBP1/CBP80 and NCBP3 (By similarity). Interacts with METTL3 (By similarity). Interacts with ZFC3H1 in a RNase-insensitive manner (By similarity). Interacts with MTREX (By similarity). Interacts with TASOR (PubMed:31112734). Interacts with DHX34; the interaction is RNA-dependent (By similarity). Interacts with KPNA3 (By similarity).</text>
</comment>
<comment type="subcellular location">
    <subcellularLocation>
        <location evidence="7">Nucleus</location>
    </subcellularLocation>
    <subcellularLocation>
        <location evidence="1">Cytoplasm</location>
    </subcellularLocation>
    <text evidence="1">Localized in cytoplasmic mRNP granules containing untranslated mRNAs.</text>
</comment>
<comment type="tissue specificity">
    <text evidence="8">Expressed in the spermatogonia, spermatocytes and granular cells within the cerebellum.</text>
</comment>
<comment type="PTM">
    <text evidence="1">Dephosphorylated at Thr-21 by the PNUTS-PP1 complex during RNA polymerase II transcription pause-release.</text>
</comment>
<comment type="similarity">
    <text evidence="9">Belongs to the NCBP1 family.</text>
</comment>
<reference key="1">
    <citation type="journal article" date="2005" name="Science">
        <title>The transcriptional landscape of the mammalian genome.</title>
        <authorList>
            <person name="Carninci P."/>
            <person name="Kasukawa T."/>
            <person name="Katayama S."/>
            <person name="Gough J."/>
            <person name="Frith M.C."/>
            <person name="Maeda N."/>
            <person name="Oyama R."/>
            <person name="Ravasi T."/>
            <person name="Lenhard B."/>
            <person name="Wells C."/>
            <person name="Kodzius R."/>
            <person name="Shimokawa K."/>
            <person name="Bajic V.B."/>
            <person name="Brenner S.E."/>
            <person name="Batalov S."/>
            <person name="Forrest A.R."/>
            <person name="Zavolan M."/>
            <person name="Davis M.J."/>
            <person name="Wilming L.G."/>
            <person name="Aidinis V."/>
            <person name="Allen J.E."/>
            <person name="Ambesi-Impiombato A."/>
            <person name="Apweiler R."/>
            <person name="Aturaliya R.N."/>
            <person name="Bailey T.L."/>
            <person name="Bansal M."/>
            <person name="Baxter L."/>
            <person name="Beisel K.W."/>
            <person name="Bersano T."/>
            <person name="Bono H."/>
            <person name="Chalk A.M."/>
            <person name="Chiu K.P."/>
            <person name="Choudhary V."/>
            <person name="Christoffels A."/>
            <person name="Clutterbuck D.R."/>
            <person name="Crowe M.L."/>
            <person name="Dalla E."/>
            <person name="Dalrymple B.P."/>
            <person name="de Bono B."/>
            <person name="Della Gatta G."/>
            <person name="di Bernardo D."/>
            <person name="Down T."/>
            <person name="Engstrom P."/>
            <person name="Fagiolini M."/>
            <person name="Faulkner G."/>
            <person name="Fletcher C.F."/>
            <person name="Fukushima T."/>
            <person name="Furuno M."/>
            <person name="Futaki S."/>
            <person name="Gariboldi M."/>
            <person name="Georgii-Hemming P."/>
            <person name="Gingeras T.R."/>
            <person name="Gojobori T."/>
            <person name="Green R.E."/>
            <person name="Gustincich S."/>
            <person name="Harbers M."/>
            <person name="Hayashi Y."/>
            <person name="Hensch T.K."/>
            <person name="Hirokawa N."/>
            <person name="Hill D."/>
            <person name="Huminiecki L."/>
            <person name="Iacono M."/>
            <person name="Ikeo K."/>
            <person name="Iwama A."/>
            <person name="Ishikawa T."/>
            <person name="Jakt M."/>
            <person name="Kanapin A."/>
            <person name="Katoh M."/>
            <person name="Kawasawa Y."/>
            <person name="Kelso J."/>
            <person name="Kitamura H."/>
            <person name="Kitano H."/>
            <person name="Kollias G."/>
            <person name="Krishnan S.P."/>
            <person name="Kruger A."/>
            <person name="Kummerfeld S.K."/>
            <person name="Kurochkin I.V."/>
            <person name="Lareau L.F."/>
            <person name="Lazarevic D."/>
            <person name="Lipovich L."/>
            <person name="Liu J."/>
            <person name="Liuni S."/>
            <person name="McWilliam S."/>
            <person name="Madan Babu M."/>
            <person name="Madera M."/>
            <person name="Marchionni L."/>
            <person name="Matsuda H."/>
            <person name="Matsuzawa S."/>
            <person name="Miki H."/>
            <person name="Mignone F."/>
            <person name="Miyake S."/>
            <person name="Morris K."/>
            <person name="Mottagui-Tabar S."/>
            <person name="Mulder N."/>
            <person name="Nakano N."/>
            <person name="Nakauchi H."/>
            <person name="Ng P."/>
            <person name="Nilsson R."/>
            <person name="Nishiguchi S."/>
            <person name="Nishikawa S."/>
            <person name="Nori F."/>
            <person name="Ohara O."/>
            <person name="Okazaki Y."/>
            <person name="Orlando V."/>
            <person name="Pang K.C."/>
            <person name="Pavan W.J."/>
            <person name="Pavesi G."/>
            <person name="Pesole G."/>
            <person name="Petrovsky N."/>
            <person name="Piazza S."/>
            <person name="Reed J."/>
            <person name="Reid J.F."/>
            <person name="Ring B.Z."/>
            <person name="Ringwald M."/>
            <person name="Rost B."/>
            <person name="Ruan Y."/>
            <person name="Salzberg S.L."/>
            <person name="Sandelin A."/>
            <person name="Schneider C."/>
            <person name="Schoenbach C."/>
            <person name="Sekiguchi K."/>
            <person name="Semple C.A."/>
            <person name="Seno S."/>
            <person name="Sessa L."/>
            <person name="Sheng Y."/>
            <person name="Shibata Y."/>
            <person name="Shimada H."/>
            <person name="Shimada K."/>
            <person name="Silva D."/>
            <person name="Sinclair B."/>
            <person name="Sperling S."/>
            <person name="Stupka E."/>
            <person name="Sugiura K."/>
            <person name="Sultana R."/>
            <person name="Takenaka Y."/>
            <person name="Taki K."/>
            <person name="Tammoja K."/>
            <person name="Tan S.L."/>
            <person name="Tang S."/>
            <person name="Taylor M.S."/>
            <person name="Tegner J."/>
            <person name="Teichmann S.A."/>
            <person name="Ueda H.R."/>
            <person name="van Nimwegen E."/>
            <person name="Verardo R."/>
            <person name="Wei C.L."/>
            <person name="Yagi K."/>
            <person name="Yamanishi H."/>
            <person name="Zabarovsky E."/>
            <person name="Zhu S."/>
            <person name="Zimmer A."/>
            <person name="Hide W."/>
            <person name="Bult C."/>
            <person name="Grimmond S.M."/>
            <person name="Teasdale R.D."/>
            <person name="Liu E.T."/>
            <person name="Brusic V."/>
            <person name="Quackenbush J."/>
            <person name="Wahlestedt C."/>
            <person name="Mattick J.S."/>
            <person name="Hume D.A."/>
            <person name="Kai C."/>
            <person name="Sasaki D."/>
            <person name="Tomaru Y."/>
            <person name="Fukuda S."/>
            <person name="Kanamori-Katayama M."/>
            <person name="Suzuki M."/>
            <person name="Aoki J."/>
            <person name="Arakawa T."/>
            <person name="Iida J."/>
            <person name="Imamura K."/>
            <person name="Itoh M."/>
            <person name="Kato T."/>
            <person name="Kawaji H."/>
            <person name="Kawagashira N."/>
            <person name="Kawashima T."/>
            <person name="Kojima M."/>
            <person name="Kondo S."/>
            <person name="Konno H."/>
            <person name="Nakano K."/>
            <person name="Ninomiya N."/>
            <person name="Nishio T."/>
            <person name="Okada M."/>
            <person name="Plessy C."/>
            <person name="Shibata K."/>
            <person name="Shiraki T."/>
            <person name="Suzuki S."/>
            <person name="Tagami M."/>
            <person name="Waki K."/>
            <person name="Watahiki A."/>
            <person name="Okamura-Oho Y."/>
            <person name="Suzuki H."/>
            <person name="Kawai J."/>
            <person name="Hayashizaki Y."/>
        </authorList>
    </citation>
    <scope>NUCLEOTIDE SEQUENCE [LARGE SCALE MRNA]</scope>
    <source>
        <strain>C57BL/6J</strain>
        <tissue>Testis</tissue>
        <tissue>Thymus</tissue>
    </source>
</reference>
<reference key="2">
    <citation type="journal article" date="2009" name="PLoS Biol.">
        <title>Lineage-specific biology revealed by a finished genome assembly of the mouse.</title>
        <authorList>
            <person name="Church D.M."/>
            <person name="Goodstadt L."/>
            <person name="Hillier L.W."/>
            <person name="Zody M.C."/>
            <person name="Goldstein S."/>
            <person name="She X."/>
            <person name="Bult C.J."/>
            <person name="Agarwala R."/>
            <person name="Cherry J.L."/>
            <person name="DiCuccio M."/>
            <person name="Hlavina W."/>
            <person name="Kapustin Y."/>
            <person name="Meric P."/>
            <person name="Maglott D."/>
            <person name="Birtle Z."/>
            <person name="Marques A.C."/>
            <person name="Graves T."/>
            <person name="Zhou S."/>
            <person name="Teague B."/>
            <person name="Potamousis K."/>
            <person name="Churas C."/>
            <person name="Place M."/>
            <person name="Herschleb J."/>
            <person name="Runnheim R."/>
            <person name="Forrest D."/>
            <person name="Amos-Landgraf J."/>
            <person name="Schwartz D.C."/>
            <person name="Cheng Z."/>
            <person name="Lindblad-Toh K."/>
            <person name="Eichler E.E."/>
            <person name="Ponting C.P."/>
        </authorList>
    </citation>
    <scope>NUCLEOTIDE SEQUENCE [LARGE SCALE GENOMIC DNA]</scope>
    <source>
        <strain>C57BL/6J</strain>
    </source>
</reference>
<reference key="3">
    <citation type="submission" date="2005-09" db="EMBL/GenBank/DDBJ databases">
        <authorList>
            <person name="Mural R.J."/>
            <person name="Adams M.D."/>
            <person name="Myers E.W."/>
            <person name="Smith H.O."/>
            <person name="Venter J.C."/>
        </authorList>
    </citation>
    <scope>NUCLEOTIDE SEQUENCE [LARGE SCALE GENOMIC DNA]</scope>
</reference>
<reference key="4">
    <citation type="journal article" date="2004" name="Genome Res.">
        <title>The status, quality, and expansion of the NIH full-length cDNA project: the Mammalian Gene Collection (MGC).</title>
        <authorList>
            <consortium name="The MGC Project Team"/>
        </authorList>
    </citation>
    <scope>NUCLEOTIDE SEQUENCE [LARGE SCALE MRNA]</scope>
    <source>
        <strain>C57BL/6J</strain>
        <tissue>Brain</tissue>
    </source>
</reference>
<reference key="5">
    <citation type="journal article" date="2000" name="Cell">
        <title>PHAX, a mediator of U snRNA nuclear export whose activity is regulated by phosphorylation.</title>
        <authorList>
            <person name="Ohno M."/>
            <person name="Segref A."/>
            <person name="Bachi A."/>
            <person name="Wilm M."/>
            <person name="Mattaj I.W."/>
        </authorList>
    </citation>
    <scope>IDENTIFICATION IN A U SNRNA EXPORT COMPLEX WITH PHAX/RNUXA; NCBP2; RAN; XPO1 AND M7G-CAPPED RNA</scope>
</reference>
<reference key="6">
    <citation type="journal article" date="2001" name="RNA">
        <title>The evolutionarily conserved region of the U snRNA export mediator PHAX is a novel RNA-binding domain that is essential for U snRNA export.</title>
        <authorList>
            <person name="Segref A."/>
            <person name="Mattaj I.W."/>
            <person name="Ohno M."/>
        </authorList>
    </citation>
    <scope>INTERACTION WITH PHAX/RNUXA</scope>
</reference>
<reference key="7">
    <citation type="journal article" date="2007" name="Proc. Natl. Acad. Sci. U.S.A.">
        <title>Large-scale phosphorylation analysis of mouse liver.</title>
        <authorList>
            <person name="Villen J."/>
            <person name="Beausoleil S.A."/>
            <person name="Gerber S.A."/>
            <person name="Gygi S.P."/>
        </authorList>
    </citation>
    <scope>PHOSPHORYLATION [LARGE SCALE ANALYSIS] AT SER-22</scope>
    <scope>IDENTIFICATION BY MASS SPECTROMETRY [LARGE SCALE ANALYSIS]</scope>
    <source>
        <tissue>Liver</tissue>
    </source>
</reference>
<reference key="8">
    <citation type="journal article" date="2009" name="Cell">
        <title>Ars2 links the nuclear cap-binding complex to RNA interference and cell proliferation.</title>
        <authorList>
            <person name="Gruber J.J."/>
            <person name="Zatechka D.S."/>
            <person name="Sabin L.R."/>
            <person name="Yong J."/>
            <person name="Lum J.J."/>
            <person name="Kong M."/>
            <person name="Zong W.-X."/>
            <person name="Zhang Z."/>
            <person name="Lau C.-K."/>
            <person name="Rawlings J."/>
            <person name="Cherry S."/>
            <person name="Ihle J.N."/>
            <person name="Dreyfuss G."/>
            <person name="Thompson C.B."/>
        </authorList>
    </citation>
    <scope>FUNCTION IN MIRNAS BIOGENESIS</scope>
    <scope>INTERACTION WITH SRRT AND DROSHA</scope>
</reference>
<reference key="9">
    <citation type="journal article" date="2009" name="Immunity">
        <title>The phagosomal proteome in interferon-gamma-activated macrophages.</title>
        <authorList>
            <person name="Trost M."/>
            <person name="English L."/>
            <person name="Lemieux S."/>
            <person name="Courcelles M."/>
            <person name="Desjardins M."/>
            <person name="Thibault P."/>
        </authorList>
    </citation>
    <scope>IDENTIFICATION BY MASS SPECTROMETRY [LARGE SCALE ANALYSIS]</scope>
</reference>
<reference key="10">
    <citation type="journal article" date="2010" name="Cell">
        <title>A tissue-specific atlas of mouse protein phosphorylation and expression.</title>
        <authorList>
            <person name="Huttlin E.L."/>
            <person name="Jedrychowski M.P."/>
            <person name="Elias J.E."/>
            <person name="Goswami T."/>
            <person name="Rad R."/>
            <person name="Beausoleil S.A."/>
            <person name="Villen J."/>
            <person name="Haas W."/>
            <person name="Sowa M.E."/>
            <person name="Gygi S.P."/>
        </authorList>
    </citation>
    <scope>PHOSPHORYLATION [LARGE SCALE ANALYSIS] AT THR-21 AND SER-22</scope>
    <scope>IDENTIFICATION BY MASS SPECTROMETRY [LARGE SCALE ANALYSIS]</scope>
    <source>
        <tissue>Brain</tissue>
        <tissue>Brown adipose tissue</tissue>
        <tissue>Heart</tissue>
        <tissue>Kidney</tissue>
        <tissue>Lung</tissue>
        <tissue>Pancreas</tissue>
        <tissue>Spleen</tissue>
        <tissue>Testis</tissue>
    </source>
</reference>
<reference key="11">
    <citation type="journal article" date="2012" name="Science">
        <title>Feedback regulation of transcriptional termination by the mammalian circadian clock PERIOD complex.</title>
        <authorList>
            <person name="Padmanabhan K."/>
            <person name="Robles M.S."/>
            <person name="Westerling T."/>
            <person name="Weitz C.J."/>
        </authorList>
    </citation>
    <scope>IDENTIFICATION IN A LARGE PER COMPLEX</scope>
    <scope>SUBCELLULAR LOCATION</scope>
</reference>
<reference key="12">
    <citation type="journal article" date="2019" name="Exp. Cell Res.">
        <title>Fam208a orchestrates interaction protein network essential for early embryonic development and cell division.</title>
        <authorList>
            <person name="Gresakova V."/>
            <person name="Novosadova V."/>
            <person name="Prochazkova M."/>
            <person name="Bhargava S."/>
            <person name="Jenickova I."/>
            <person name="Prochazka J."/>
            <person name="Sedlacek R."/>
        </authorList>
    </citation>
    <scope>INTERACTION WITH TASOR</scope>
    <scope>TISSUE SPECIFICITY</scope>
</reference>